<organism>
    <name type="scientific">Rattus norvegicus</name>
    <name type="common">Rat</name>
    <dbReference type="NCBI Taxonomy" id="10116"/>
    <lineage>
        <taxon>Eukaryota</taxon>
        <taxon>Metazoa</taxon>
        <taxon>Chordata</taxon>
        <taxon>Craniata</taxon>
        <taxon>Vertebrata</taxon>
        <taxon>Euteleostomi</taxon>
        <taxon>Mammalia</taxon>
        <taxon>Eutheria</taxon>
        <taxon>Euarchontoglires</taxon>
        <taxon>Glires</taxon>
        <taxon>Rodentia</taxon>
        <taxon>Myomorpha</taxon>
        <taxon>Muroidea</taxon>
        <taxon>Muridae</taxon>
        <taxon>Murinae</taxon>
        <taxon>Rattus</taxon>
    </lineage>
</organism>
<sequence length="356" mass="39445">MFSSVAHLARANPFNAPHLQLVHDVSGPRSPPGPPRRSRHLAAAAVEGYSCEFGSMKYYALCGFGGVLSCGLTHTAVVPLDLVKCRMQVDPQKYKGIFNGFSITLKEDGVRGLAKGWAPTLIGYSMQGLCKFGFYEVFKALYSNILGEENTYLWRTSLYLAASASAEFFADIALAPMEAAKVRIQTQPGYANTLREAVPKMYKEEGLNAFYKGVAPVWMRQIPYTMMKFACFERTVEALYKFVVPKPRSECTKAEQLVVTFVAGYIAGVFCAIVSHPADSVVSVLNKEKGSTASQVLQRLGFRGVWKGLFARIIMIGTLTALQWFIYDSVKVYFRLPRPPPPEMPESLKKKLGLTE</sequence>
<keyword id="KW-0007">Acetylation</keyword>
<keyword id="KW-0903">Direct protein sequencing</keyword>
<keyword id="KW-0472">Membrane</keyword>
<keyword id="KW-0488">Methylation</keyword>
<keyword id="KW-0496">Mitochondrion</keyword>
<keyword id="KW-0999">Mitochondrion inner membrane</keyword>
<keyword id="KW-0597">Phosphoprotein</keyword>
<keyword id="KW-1185">Reference proteome</keyword>
<keyword id="KW-0677">Repeat</keyword>
<keyword id="KW-0769">Symport</keyword>
<keyword id="KW-0809">Transit peptide</keyword>
<keyword id="KW-0812">Transmembrane</keyword>
<keyword id="KW-1133">Transmembrane helix</keyword>
<keyword id="KW-0813">Transport</keyword>
<accession>P16036</accession>
<feature type="transit peptide" description="Mitochondrion" evidence="6 8">
    <location>
        <begin position="1"/>
        <end position="44"/>
    </location>
</feature>
<feature type="chain" id="PRO_0000019258" description="Solute carrier family 25 member 3">
    <location>
        <begin position="45"/>
        <end position="356"/>
    </location>
</feature>
<feature type="topological domain" description="Mitochondrial intermembrane" evidence="4">
    <location>
        <begin position="45"/>
        <end position="57"/>
    </location>
</feature>
<feature type="transmembrane region" description="Helical; Name=1" evidence="4">
    <location>
        <begin position="58"/>
        <end position="80"/>
    </location>
</feature>
<feature type="topological domain" description="Mitochondrial matrix" evidence="4">
    <location>
        <begin position="81"/>
        <end position="115"/>
    </location>
</feature>
<feature type="transmembrane region" description="Helical; Name=2" evidence="4">
    <location>
        <begin position="116"/>
        <end position="135"/>
    </location>
</feature>
<feature type="topological domain" description="Mitochondrial intermembrane" evidence="4">
    <location>
        <begin position="136"/>
        <end position="155"/>
    </location>
</feature>
<feature type="transmembrane region" description="Helical; Name=3" evidence="4">
    <location>
        <begin position="156"/>
        <end position="177"/>
    </location>
</feature>
<feature type="topological domain" description="Mitochondrial matrix" evidence="4">
    <location>
        <begin position="178"/>
        <end position="212"/>
    </location>
</feature>
<feature type="transmembrane region" description="Helical; Name=4" evidence="4">
    <location>
        <begin position="213"/>
        <end position="232"/>
    </location>
</feature>
<feature type="topological domain" description="Mitochondrial intermembrane" evidence="4">
    <location>
        <begin position="233"/>
        <end position="255"/>
    </location>
</feature>
<feature type="transmembrane region" description="Helical; Name=5" evidence="4">
    <location>
        <begin position="256"/>
        <end position="278"/>
    </location>
</feature>
<feature type="topological domain" description="Mitochondrial matrix" evidence="4">
    <location>
        <begin position="279"/>
        <end position="308"/>
    </location>
</feature>
<feature type="transmembrane region" description="Helical; Name=6" evidence="4">
    <location>
        <begin position="309"/>
        <end position="327"/>
    </location>
</feature>
<feature type="topological domain" description="Mitochondrial intermembrane" evidence="4">
    <location>
        <begin position="328"/>
        <end position="356"/>
    </location>
</feature>
<feature type="repeat" description="Solcar 1">
    <location>
        <begin position="57"/>
        <end position="141"/>
    </location>
</feature>
<feature type="repeat" description="Solcar 2">
    <location>
        <begin position="154"/>
        <end position="238"/>
    </location>
</feature>
<feature type="repeat" description="Solcar 3">
    <location>
        <begin position="255"/>
        <end position="333"/>
    </location>
</feature>
<feature type="modified residue" description="N6-acetyllysine" evidence="2">
    <location>
        <position position="93"/>
    </location>
</feature>
<feature type="modified residue" description="N6-methyllysine" evidence="2">
    <location>
        <position position="106"/>
    </location>
</feature>
<feature type="modified residue" description="Phosphotyrosine" evidence="2">
    <location>
        <position position="190"/>
    </location>
</feature>
<feature type="modified residue" description="N6-acetyllysine" evidence="3">
    <location>
        <position position="203"/>
    </location>
</feature>
<name>S25A3_RAT</name>
<evidence type="ECO:0000250" key="1">
    <source>
        <dbReference type="UniProtKB" id="P12234"/>
    </source>
</evidence>
<evidence type="ECO:0000250" key="2">
    <source>
        <dbReference type="UniProtKB" id="Q00325"/>
    </source>
</evidence>
<evidence type="ECO:0000250" key="3">
    <source>
        <dbReference type="UniProtKB" id="Q8VEM8"/>
    </source>
</evidence>
<evidence type="ECO:0000255" key="4"/>
<evidence type="ECO:0000269" key="5">
    <source>
    </source>
</evidence>
<evidence type="ECO:0000269" key="6">
    <source>
    </source>
</evidence>
<evidence type="ECO:0000269" key="7">
    <source>
    </source>
</evidence>
<evidence type="ECO:0000269" key="8">
    <source>
    </source>
</evidence>
<evidence type="ECO:0000305" key="9"/>
<evidence type="ECO:0000312" key="10">
    <source>
        <dbReference type="RGD" id="70986"/>
    </source>
</evidence>
<gene>
    <name evidence="10" type="primary">Slc25a3</name>
    <name type="synonym">Phc</name>
</gene>
<proteinExistence type="evidence at protein level"/>
<comment type="function">
    <text evidence="1 2 5">Inorganic ion transporter that transports phosphate or copper ions across the mitochondrial inner membrane into the matrix compartment (By similarity). Mediates proton-coupled symport of phosphate ions necessary for mitochondrial oxidative phosphorylation of ADP to ATP (By similarity). Transports copper ions probably in the form of anionic copper(I) complexes to maintain mitochondrial matrix copper pool and to supply copper for cytochrome C oxidase complex assembly (By similarity). May also play a role in regulation of the mitochondrial permeability transition pore (mPTP) (PubMed:18667415).</text>
</comment>
<comment type="catalytic activity">
    <reaction evidence="1">
        <text>phosphate(in) + H(+)(in) = phosphate(out) + H(+)(out)</text>
        <dbReference type="Rhea" id="RHEA:29939"/>
        <dbReference type="ChEBI" id="CHEBI:15378"/>
        <dbReference type="ChEBI" id="CHEBI:43474"/>
    </reaction>
    <physiologicalReaction direction="right-to-left" evidence="1">
        <dbReference type="Rhea" id="RHEA:29941"/>
    </physiologicalReaction>
</comment>
<comment type="subunit">
    <text evidence="5">Interacts with PPIF; the interaction is impaired by CsA.</text>
</comment>
<comment type="subcellular location">
    <subcellularLocation>
        <location evidence="7">Mitochondrion inner membrane</location>
        <topology evidence="7">Multi-pass membrane protein</topology>
    </subcellularLocation>
</comment>
<comment type="similarity">
    <text evidence="9">Belongs to the mitochondrial carrier (TC 2.A.29) family.</text>
</comment>
<dbReference type="EMBL" id="M23984">
    <property type="protein sequence ID" value="AAA41634.1"/>
    <property type="molecule type" value="mRNA"/>
</dbReference>
<dbReference type="PIR" id="A34350">
    <property type="entry name" value="A34350"/>
</dbReference>
<dbReference type="SMR" id="P16036"/>
<dbReference type="CORUM" id="P16036"/>
<dbReference type="FunCoup" id="P16036">
    <property type="interactions" value="2155"/>
</dbReference>
<dbReference type="IntAct" id="P16036">
    <property type="interactions" value="4"/>
</dbReference>
<dbReference type="MINT" id="P16036"/>
<dbReference type="STRING" id="10116.ENSRNOP00000070805"/>
<dbReference type="GlyGen" id="P16036">
    <property type="glycosylation" value="1 site, 1 O-linked glycan (1 site)"/>
</dbReference>
<dbReference type="iPTMnet" id="P16036"/>
<dbReference type="PhosphoSitePlus" id="P16036"/>
<dbReference type="SwissPalm" id="P16036"/>
<dbReference type="jPOST" id="P16036"/>
<dbReference type="PaxDb" id="10116-ENSRNOP00000011494"/>
<dbReference type="UCSC" id="RGD:70986">
    <property type="organism name" value="rat"/>
</dbReference>
<dbReference type="AGR" id="RGD:70986"/>
<dbReference type="RGD" id="70986">
    <property type="gene designation" value="Slc25a3"/>
</dbReference>
<dbReference type="eggNOG" id="KOG0767">
    <property type="taxonomic scope" value="Eukaryota"/>
</dbReference>
<dbReference type="InParanoid" id="P16036"/>
<dbReference type="PRO" id="PR:P16036"/>
<dbReference type="Proteomes" id="UP000002494">
    <property type="component" value="Unplaced"/>
</dbReference>
<dbReference type="GO" id="GO:0005743">
    <property type="term" value="C:mitochondrial inner membrane"/>
    <property type="evidence" value="ECO:0000250"/>
    <property type="project" value="UniProtKB"/>
</dbReference>
<dbReference type="GO" id="GO:0005315">
    <property type="term" value="F:phosphate transmembrane transporter activity"/>
    <property type="evidence" value="ECO:0000318"/>
    <property type="project" value="GO_Central"/>
</dbReference>
<dbReference type="GO" id="GO:0015317">
    <property type="term" value="F:phosphate:proton symporter activity"/>
    <property type="evidence" value="ECO:0000250"/>
    <property type="project" value="UniProtKB"/>
</dbReference>
<dbReference type="GO" id="GO:0044877">
    <property type="term" value="F:protein-containing complex binding"/>
    <property type="evidence" value="ECO:0000266"/>
    <property type="project" value="RGD"/>
</dbReference>
<dbReference type="GO" id="GO:1990547">
    <property type="term" value="P:mitochondrial phosphate ion transmembrane transport"/>
    <property type="evidence" value="ECO:0007669"/>
    <property type="project" value="InterPro"/>
</dbReference>
<dbReference type="GO" id="GO:0035435">
    <property type="term" value="P:phosphate ion transmembrane transport"/>
    <property type="evidence" value="ECO:0000318"/>
    <property type="project" value="GO_Central"/>
</dbReference>
<dbReference type="FunFam" id="1.50.40.10:FF:000005">
    <property type="entry name" value="Mitochondrial phosphate carrier protein 2"/>
    <property type="match status" value="1"/>
</dbReference>
<dbReference type="Gene3D" id="1.50.40.10">
    <property type="entry name" value="Mitochondrial carrier domain"/>
    <property type="match status" value="1"/>
</dbReference>
<dbReference type="InterPro" id="IPR018108">
    <property type="entry name" value="Mitochondrial_sb/sol_carrier"/>
</dbReference>
<dbReference type="InterPro" id="IPR023395">
    <property type="entry name" value="Mt_carrier_dom_sf"/>
</dbReference>
<dbReference type="InterPro" id="IPR044677">
    <property type="entry name" value="SLC25A3/Pic2/Mir1-like"/>
</dbReference>
<dbReference type="PANTHER" id="PTHR45671">
    <property type="entry name" value="SOLUTE CARRIER FAMILY 25 (MITOCHONDRIAL CARRIER PHOSPHATE CARRIER), MEMBER 3, LIKE-RELATED-RELATED"/>
    <property type="match status" value="1"/>
</dbReference>
<dbReference type="PANTHER" id="PTHR45671:SF10">
    <property type="entry name" value="SOLUTE CARRIER FAMILY 25 MEMBER 3"/>
    <property type="match status" value="1"/>
</dbReference>
<dbReference type="Pfam" id="PF00153">
    <property type="entry name" value="Mito_carr"/>
    <property type="match status" value="3"/>
</dbReference>
<dbReference type="SUPFAM" id="SSF103506">
    <property type="entry name" value="Mitochondrial carrier"/>
    <property type="match status" value="1"/>
</dbReference>
<dbReference type="PROSITE" id="PS50920">
    <property type="entry name" value="SOLCAR"/>
    <property type="match status" value="3"/>
</dbReference>
<reference key="1">
    <citation type="journal article" date="1989" name="J. Biol. Chem.">
        <title>Energy-linked anion transport. Cloning, sequencing, and characterization of a full length cDNA encoding the rat liver mitochondrial proton/phosphate symporter.</title>
        <authorList>
            <person name="Ferreira G.C."/>
            <person name="Pratt R.D."/>
            <person name="Pedersen P.L."/>
        </authorList>
    </citation>
    <scope>NUCLEOTIDE SEQUENCE [MRNA]</scope>
    <scope>PROTEIN SEQUENCE OF 45-62</scope>
    <source>
        <tissue>Liver</tissue>
    </source>
</reference>
<reference key="2">
    <citation type="journal article" date="1990" name="J. Biol. Chem.">
        <title>Mitochondrial proton/phosphate transporter. An antibody directed against the COOH terminus and proteolytic cleavage experiments provides new insights about its membrane topology.</title>
        <authorList>
            <person name="Ferreira G.C."/>
            <person name="Pratt R.D."/>
            <person name="Pedersen P.L."/>
        </authorList>
    </citation>
    <scope>SUBCELLULAR LOCATION</scope>
    <scope>MEMBRANE TOPOLOGY</scope>
</reference>
<reference key="3">
    <citation type="journal article" date="1991" name="J. Biol. Chem.">
        <title>Mitochondrial phosphate transport. Import of the H+/Pi symporter and role of the presequence.</title>
        <authorList>
            <person name="Pratt R.D."/>
            <person name="Ferreira G.C."/>
            <person name="Pedersen P.L."/>
        </authorList>
    </citation>
    <scope>TRANSIT PEPTIDE CLEAVAGE SITE</scope>
</reference>
<reference key="4">
    <citation type="journal article" date="2008" name="J. Biol. Chem.">
        <title>The mitochondrial phosphate carrier interacts with cyclophilin D and may play a key role in the permeability transition.</title>
        <authorList>
            <person name="Leung A.W."/>
            <person name="Varanyuwatana P."/>
            <person name="Halestrap A.P."/>
        </authorList>
    </citation>
    <scope>FUNCTION</scope>
    <scope>INTERACTION WITH PPIF</scope>
</reference>
<protein>
    <recommendedName>
        <fullName evidence="2">Solute carrier family 25 member 3</fullName>
    </recommendedName>
    <alternativeName>
        <fullName evidence="2">Phosphate carrier protein, mitochondrial</fullName>
    </alternativeName>
    <alternativeName>
        <fullName>Phosphate transport protein</fullName>
        <shortName>PTP</shortName>
    </alternativeName>
</protein>